<evidence type="ECO:0000250" key="1">
    <source>
        <dbReference type="UniProtKB" id="P0A9M2"/>
    </source>
</evidence>
<evidence type="ECO:0000250" key="2">
    <source>
        <dbReference type="UniProtKB" id="P9WHQ9"/>
    </source>
</evidence>
<evidence type="ECO:0000305" key="3"/>
<name>HGPRT_MYCBO</name>
<organism>
    <name type="scientific">Mycobacterium bovis (strain ATCC BAA-935 / AF2122/97)</name>
    <dbReference type="NCBI Taxonomy" id="233413"/>
    <lineage>
        <taxon>Bacteria</taxon>
        <taxon>Bacillati</taxon>
        <taxon>Actinomycetota</taxon>
        <taxon>Actinomycetes</taxon>
        <taxon>Mycobacteriales</taxon>
        <taxon>Mycobacteriaceae</taxon>
        <taxon>Mycobacterium</taxon>
        <taxon>Mycobacterium tuberculosis complex</taxon>
    </lineage>
</organism>
<keyword id="KW-0963">Cytoplasm</keyword>
<keyword id="KW-0328">Glycosyltransferase</keyword>
<keyword id="KW-0460">Magnesium</keyword>
<keyword id="KW-0479">Metal-binding</keyword>
<keyword id="KW-0547">Nucleotide-binding</keyword>
<keyword id="KW-0660">Purine salvage</keyword>
<keyword id="KW-1185">Reference proteome</keyword>
<keyword id="KW-0808">Transferase</keyword>
<accession>P0A5T1</accession>
<accession>A0A1R3Y585</accession>
<accession>O06383</accession>
<accession>P96906</accession>
<accession>X2BNW2</accession>
<feature type="chain" id="PRO_0000139610" description="Hypoxanthine-guanine phosphoribosyltransferase">
    <location>
        <begin position="1"/>
        <end position="202"/>
    </location>
</feature>
<feature type="active site" description="Proton acceptor" evidence="1">
    <location>
        <position position="126"/>
    </location>
</feature>
<feature type="binding site" evidence="2">
    <location>
        <position position="66"/>
    </location>
    <ligand>
        <name>diphosphate</name>
        <dbReference type="ChEBI" id="CHEBI:33019"/>
    </ligand>
</feature>
<feature type="binding site" evidence="2">
    <location>
        <position position="67"/>
    </location>
    <ligand>
        <name>diphosphate</name>
        <dbReference type="ChEBI" id="CHEBI:33019"/>
    </ligand>
</feature>
<feature type="binding site" evidence="2">
    <location>
        <position position="122"/>
    </location>
    <ligand>
        <name>Mg(2+)</name>
        <dbReference type="ChEBI" id="CHEBI:18420"/>
    </ligand>
</feature>
<feature type="binding site" evidence="2">
    <location>
        <position position="123"/>
    </location>
    <ligand>
        <name>Mg(2+)</name>
        <dbReference type="ChEBI" id="CHEBI:18420"/>
    </ligand>
</feature>
<feature type="binding site" evidence="2">
    <location>
        <position position="154"/>
    </location>
    <ligand>
        <name>GMP</name>
        <dbReference type="ChEBI" id="CHEBI:58115"/>
    </ligand>
</feature>
<feature type="binding site" evidence="2">
    <location>
        <begin position="175"/>
        <end position="176"/>
    </location>
    <ligand>
        <name>GMP</name>
        <dbReference type="ChEBI" id="CHEBI:58115"/>
    </ligand>
</feature>
<feature type="binding site" evidence="2">
    <location>
        <position position="182"/>
    </location>
    <ligand>
        <name>GMP</name>
        <dbReference type="ChEBI" id="CHEBI:58115"/>
    </ligand>
</feature>
<feature type="binding site" evidence="2">
    <location>
        <position position="188"/>
    </location>
    <ligand>
        <name>diphosphate</name>
        <dbReference type="ChEBI" id="CHEBI:33019"/>
    </ligand>
</feature>
<reference key="1">
    <citation type="journal article" date="2003" name="Proc. Natl. Acad. Sci. U.S.A.">
        <title>The complete genome sequence of Mycobacterium bovis.</title>
        <authorList>
            <person name="Garnier T."/>
            <person name="Eiglmeier K."/>
            <person name="Camus J.-C."/>
            <person name="Medina N."/>
            <person name="Mansoor H."/>
            <person name="Pryor M."/>
            <person name="Duthoy S."/>
            <person name="Grondin S."/>
            <person name="Lacroix C."/>
            <person name="Monsempe C."/>
            <person name="Simon S."/>
            <person name="Harris B."/>
            <person name="Atkin R."/>
            <person name="Doggett J."/>
            <person name="Mayes R."/>
            <person name="Keating L."/>
            <person name="Wheeler P.R."/>
            <person name="Parkhill J."/>
            <person name="Barrell B.G."/>
            <person name="Cole S.T."/>
            <person name="Gordon S.V."/>
            <person name="Hewinson R.G."/>
        </authorList>
    </citation>
    <scope>NUCLEOTIDE SEQUENCE [LARGE SCALE GENOMIC DNA]</scope>
    <source>
        <strain>ATCC BAA-935 / AF2122/97</strain>
    </source>
</reference>
<reference key="2">
    <citation type="journal article" date="2017" name="Genome Announc.">
        <title>Updated reference genome sequence and annotation of Mycobacterium bovis AF2122/97.</title>
        <authorList>
            <person name="Malone K.M."/>
            <person name="Farrell D."/>
            <person name="Stuber T.P."/>
            <person name="Schubert O.T."/>
            <person name="Aebersold R."/>
            <person name="Robbe-Austerman S."/>
            <person name="Gordon S.V."/>
        </authorList>
    </citation>
    <scope>NUCLEOTIDE SEQUENCE [LARGE SCALE GENOMIC DNA]</scope>
    <scope>GENOME REANNOTATION</scope>
    <source>
        <strain>ATCC BAA-935 / AF2122/97</strain>
    </source>
</reference>
<comment type="function">
    <text evidence="2">Purine salvage pathway enzyme that catalyzes the transfer of the ribosyl-5-phosphate group from 5-phospho-alpha-D-ribose 1-diphosphate (PRPP) to the N9 position of the 6-oxopurines hypoxanthine and guanine to form the corresponding ribonucleotides IMP (inosine 5'-monophosphate) and GMP (guanosine 5'-monophosphate), with the release of PPi.</text>
</comment>
<comment type="catalytic activity">
    <reaction evidence="2">
        <text>IMP + diphosphate = hypoxanthine + 5-phospho-alpha-D-ribose 1-diphosphate</text>
        <dbReference type="Rhea" id="RHEA:17973"/>
        <dbReference type="ChEBI" id="CHEBI:17368"/>
        <dbReference type="ChEBI" id="CHEBI:33019"/>
        <dbReference type="ChEBI" id="CHEBI:58017"/>
        <dbReference type="ChEBI" id="CHEBI:58053"/>
        <dbReference type="EC" id="2.4.2.8"/>
    </reaction>
    <physiologicalReaction direction="right-to-left" evidence="2">
        <dbReference type="Rhea" id="RHEA:17975"/>
    </physiologicalReaction>
</comment>
<comment type="catalytic activity">
    <reaction evidence="2">
        <text>GMP + diphosphate = guanine + 5-phospho-alpha-D-ribose 1-diphosphate</text>
        <dbReference type="Rhea" id="RHEA:25424"/>
        <dbReference type="ChEBI" id="CHEBI:16235"/>
        <dbReference type="ChEBI" id="CHEBI:33019"/>
        <dbReference type="ChEBI" id="CHEBI:58017"/>
        <dbReference type="ChEBI" id="CHEBI:58115"/>
        <dbReference type="EC" id="2.4.2.8"/>
    </reaction>
    <physiologicalReaction direction="right-to-left" evidence="2">
        <dbReference type="Rhea" id="RHEA:25426"/>
    </physiologicalReaction>
</comment>
<comment type="cofactor">
    <cofactor evidence="2">
        <name>Mg(2+)</name>
        <dbReference type="ChEBI" id="CHEBI:18420"/>
    </cofactor>
</comment>
<comment type="pathway">
    <text evidence="2">Purine metabolism; IMP biosynthesis via salvage pathway; IMP from hypoxanthine: step 1/1.</text>
</comment>
<comment type="pathway">
    <text evidence="2">Purine metabolism; GMP biosynthesis via salvage pathway; GMP from guanine: step 1/1.</text>
</comment>
<comment type="subcellular location">
    <subcellularLocation>
        <location>Cytoplasm</location>
    </subcellularLocation>
</comment>
<comment type="similarity">
    <text evidence="3">Belongs to the purine/pyrimidine phosphoribosyltransferase family.</text>
</comment>
<comment type="sequence caution" evidence="3">
    <conflict type="erroneous initiation">
        <sequence resource="EMBL-CDS" id="SIU02276"/>
    </conflict>
    <text>Extended N-terminus.</text>
</comment>
<sequence>MHVTQSSSAITPGQTAELYPGDIKSVLLTAEQIQARIAELGEQIGNDYRELSATTGQDLLLITVLKGAVLFVTDLARAIPVPTQFEFMAVSSYGSSTSSSGVVRILKDLDRDIHGRDVLIVEDVVDSGLTLSWLSRNLTSRNPRSLRVCTLLRKPDAVHANVEIAYVGFDIPNDFVVGYGLDYDERYRDLSYIGTLDPRVYQ</sequence>
<protein>
    <recommendedName>
        <fullName>Hypoxanthine-guanine phosphoribosyltransferase</fullName>
        <shortName>HGPRT</shortName>
        <shortName>HGPRTase</shortName>
        <ecNumber evidence="2">2.4.2.8</ecNumber>
    </recommendedName>
</protein>
<proteinExistence type="inferred from homology"/>
<dbReference type="EC" id="2.4.2.8" evidence="2"/>
<dbReference type="EMBL" id="LT708304">
    <property type="protein sequence ID" value="SIU02276.1"/>
    <property type="status" value="ALT_INIT"/>
    <property type="molecule type" value="Genomic_DNA"/>
</dbReference>
<dbReference type="RefSeq" id="NP_857287.1">
    <property type="nucleotide sequence ID" value="NC_002945.3"/>
</dbReference>
<dbReference type="SMR" id="P0A5T1"/>
<dbReference type="KEGG" id="mbo:BQ2027_MB3648C"/>
<dbReference type="PATRIC" id="fig|233413.5.peg.3993"/>
<dbReference type="UniPathway" id="UPA00591">
    <property type="reaction ID" value="UER00648"/>
</dbReference>
<dbReference type="UniPathway" id="UPA00909">
    <property type="reaction ID" value="UER00887"/>
</dbReference>
<dbReference type="Proteomes" id="UP000001419">
    <property type="component" value="Chromosome"/>
</dbReference>
<dbReference type="GO" id="GO:0005829">
    <property type="term" value="C:cytosol"/>
    <property type="evidence" value="ECO:0007669"/>
    <property type="project" value="TreeGrafter"/>
</dbReference>
<dbReference type="GO" id="GO:0052657">
    <property type="term" value="F:guanine phosphoribosyltransferase activity"/>
    <property type="evidence" value="ECO:0007669"/>
    <property type="project" value="RHEA"/>
</dbReference>
<dbReference type="GO" id="GO:0004422">
    <property type="term" value="F:hypoxanthine phosphoribosyltransferase activity"/>
    <property type="evidence" value="ECO:0007669"/>
    <property type="project" value="InterPro"/>
</dbReference>
<dbReference type="GO" id="GO:0000287">
    <property type="term" value="F:magnesium ion binding"/>
    <property type="evidence" value="ECO:0007669"/>
    <property type="project" value="TreeGrafter"/>
</dbReference>
<dbReference type="GO" id="GO:0000166">
    <property type="term" value="F:nucleotide binding"/>
    <property type="evidence" value="ECO:0007669"/>
    <property type="project" value="UniProtKB-KW"/>
</dbReference>
<dbReference type="GO" id="GO:0032263">
    <property type="term" value="P:GMP salvage"/>
    <property type="evidence" value="ECO:0007669"/>
    <property type="project" value="UniProtKB-UniPathway"/>
</dbReference>
<dbReference type="GO" id="GO:0006178">
    <property type="term" value="P:guanine salvage"/>
    <property type="evidence" value="ECO:0007669"/>
    <property type="project" value="TreeGrafter"/>
</dbReference>
<dbReference type="GO" id="GO:0046100">
    <property type="term" value="P:hypoxanthine metabolic process"/>
    <property type="evidence" value="ECO:0007669"/>
    <property type="project" value="TreeGrafter"/>
</dbReference>
<dbReference type="GO" id="GO:0032264">
    <property type="term" value="P:IMP salvage"/>
    <property type="evidence" value="ECO:0007669"/>
    <property type="project" value="UniProtKB-UniPathway"/>
</dbReference>
<dbReference type="GO" id="GO:0006166">
    <property type="term" value="P:purine ribonucleoside salvage"/>
    <property type="evidence" value="ECO:0007669"/>
    <property type="project" value="UniProtKB-KW"/>
</dbReference>
<dbReference type="CDD" id="cd06223">
    <property type="entry name" value="PRTases_typeI"/>
    <property type="match status" value="1"/>
</dbReference>
<dbReference type="FunFam" id="3.40.50.2020:FF:000006">
    <property type="entry name" value="Hypoxanthine phosphoribosyltransferase"/>
    <property type="match status" value="1"/>
</dbReference>
<dbReference type="Gene3D" id="3.40.50.2020">
    <property type="match status" value="1"/>
</dbReference>
<dbReference type="InterPro" id="IPR050408">
    <property type="entry name" value="HGPRT"/>
</dbReference>
<dbReference type="InterPro" id="IPR005904">
    <property type="entry name" value="Hxn_phspho_trans"/>
</dbReference>
<dbReference type="InterPro" id="IPR000836">
    <property type="entry name" value="PRibTrfase_dom"/>
</dbReference>
<dbReference type="InterPro" id="IPR029057">
    <property type="entry name" value="PRTase-like"/>
</dbReference>
<dbReference type="NCBIfam" id="TIGR01203">
    <property type="entry name" value="HGPRTase"/>
    <property type="match status" value="1"/>
</dbReference>
<dbReference type="PANTHER" id="PTHR43340:SF1">
    <property type="entry name" value="HYPOXANTHINE PHOSPHORIBOSYLTRANSFERASE"/>
    <property type="match status" value="1"/>
</dbReference>
<dbReference type="PANTHER" id="PTHR43340">
    <property type="entry name" value="HYPOXANTHINE-GUANINE PHOSPHORIBOSYLTRANSFERASE"/>
    <property type="match status" value="1"/>
</dbReference>
<dbReference type="Pfam" id="PF00156">
    <property type="entry name" value="Pribosyltran"/>
    <property type="match status" value="1"/>
</dbReference>
<dbReference type="SUPFAM" id="SSF53271">
    <property type="entry name" value="PRTase-like"/>
    <property type="match status" value="1"/>
</dbReference>
<dbReference type="PROSITE" id="PS00103">
    <property type="entry name" value="PUR_PYR_PR_TRANSFER"/>
    <property type="match status" value="1"/>
</dbReference>
<gene>
    <name type="primary">hpt</name>
    <name type="synonym">hprT</name>
    <name type="ordered locus">BQ2027_MB3648C</name>
</gene>